<feature type="chain" id="PRO_0000175840" description="Probable transcriptional regulatory protein MS0710">
    <location>
        <begin position="1"/>
        <end position="247"/>
    </location>
</feature>
<dbReference type="EMBL" id="AE016827">
    <property type="protein sequence ID" value="AAU37317.1"/>
    <property type="molecule type" value="Genomic_DNA"/>
</dbReference>
<dbReference type="RefSeq" id="WP_011199889.1">
    <property type="nucleotide sequence ID" value="NC_006300.1"/>
</dbReference>
<dbReference type="SMR" id="Q65UP3"/>
<dbReference type="STRING" id="221988.MS0710"/>
<dbReference type="KEGG" id="msu:MS0710"/>
<dbReference type="eggNOG" id="COG0217">
    <property type="taxonomic scope" value="Bacteria"/>
</dbReference>
<dbReference type="HOGENOM" id="CLU_062974_2_2_6"/>
<dbReference type="OrthoDB" id="9781053at2"/>
<dbReference type="Proteomes" id="UP000000607">
    <property type="component" value="Chromosome"/>
</dbReference>
<dbReference type="GO" id="GO:0005829">
    <property type="term" value="C:cytosol"/>
    <property type="evidence" value="ECO:0007669"/>
    <property type="project" value="TreeGrafter"/>
</dbReference>
<dbReference type="GO" id="GO:0003677">
    <property type="term" value="F:DNA binding"/>
    <property type="evidence" value="ECO:0007669"/>
    <property type="project" value="UniProtKB-UniRule"/>
</dbReference>
<dbReference type="GO" id="GO:0006355">
    <property type="term" value="P:regulation of DNA-templated transcription"/>
    <property type="evidence" value="ECO:0007669"/>
    <property type="project" value="UniProtKB-UniRule"/>
</dbReference>
<dbReference type="FunFam" id="1.10.10.200:FF:000001">
    <property type="entry name" value="Probable transcriptional regulatory protein YebC"/>
    <property type="match status" value="1"/>
</dbReference>
<dbReference type="FunFam" id="3.30.70.980:FF:000002">
    <property type="entry name" value="Probable transcriptional regulatory protein YebC"/>
    <property type="match status" value="1"/>
</dbReference>
<dbReference type="Gene3D" id="1.10.10.200">
    <property type="match status" value="1"/>
</dbReference>
<dbReference type="Gene3D" id="3.30.70.980">
    <property type="match status" value="2"/>
</dbReference>
<dbReference type="HAMAP" id="MF_00693">
    <property type="entry name" value="Transcrip_reg_TACO1"/>
    <property type="match status" value="1"/>
</dbReference>
<dbReference type="InterPro" id="IPR017856">
    <property type="entry name" value="Integrase-like_N"/>
</dbReference>
<dbReference type="InterPro" id="IPR048300">
    <property type="entry name" value="TACO1_YebC-like_2nd/3rd_dom"/>
</dbReference>
<dbReference type="InterPro" id="IPR049083">
    <property type="entry name" value="TACO1_YebC_N"/>
</dbReference>
<dbReference type="InterPro" id="IPR002876">
    <property type="entry name" value="Transcrip_reg_TACO1-like"/>
</dbReference>
<dbReference type="InterPro" id="IPR026564">
    <property type="entry name" value="Transcrip_reg_TACO1-like_dom3"/>
</dbReference>
<dbReference type="InterPro" id="IPR029072">
    <property type="entry name" value="YebC-like"/>
</dbReference>
<dbReference type="NCBIfam" id="NF001030">
    <property type="entry name" value="PRK00110.1"/>
    <property type="match status" value="1"/>
</dbReference>
<dbReference type="NCBIfam" id="NF009044">
    <property type="entry name" value="PRK12378.1"/>
    <property type="match status" value="1"/>
</dbReference>
<dbReference type="NCBIfam" id="TIGR01033">
    <property type="entry name" value="YebC/PmpR family DNA-binding transcriptional regulator"/>
    <property type="match status" value="1"/>
</dbReference>
<dbReference type="PANTHER" id="PTHR12532:SF6">
    <property type="entry name" value="TRANSCRIPTIONAL REGULATORY PROTEIN YEBC-RELATED"/>
    <property type="match status" value="1"/>
</dbReference>
<dbReference type="PANTHER" id="PTHR12532">
    <property type="entry name" value="TRANSLATIONAL ACTIVATOR OF CYTOCHROME C OXIDASE 1"/>
    <property type="match status" value="1"/>
</dbReference>
<dbReference type="Pfam" id="PF20772">
    <property type="entry name" value="TACO1_YebC_N"/>
    <property type="match status" value="1"/>
</dbReference>
<dbReference type="Pfam" id="PF01709">
    <property type="entry name" value="Transcrip_reg"/>
    <property type="match status" value="1"/>
</dbReference>
<dbReference type="SUPFAM" id="SSF75625">
    <property type="entry name" value="YebC-like"/>
    <property type="match status" value="1"/>
</dbReference>
<evidence type="ECO:0000255" key="1">
    <source>
        <dbReference type="HAMAP-Rule" id="MF_00693"/>
    </source>
</evidence>
<accession>Q65UP3</accession>
<reference key="1">
    <citation type="journal article" date="2004" name="Nat. Biotechnol.">
        <title>The genome sequence of the capnophilic rumen bacterium Mannheimia succiniciproducens.</title>
        <authorList>
            <person name="Hong S.H."/>
            <person name="Kim J.S."/>
            <person name="Lee S.Y."/>
            <person name="In Y.H."/>
            <person name="Choi S.S."/>
            <person name="Rih J.-K."/>
            <person name="Kim C.H."/>
            <person name="Jeong H."/>
            <person name="Hur C.G."/>
            <person name="Kim J.J."/>
        </authorList>
    </citation>
    <scope>NUCLEOTIDE SEQUENCE [LARGE SCALE GENOMIC DNA]</scope>
    <source>
        <strain>KCTC 0769BP / MBEL55E</strain>
    </source>
</reference>
<sequence>MAGHSKWANIKHRKAAQDAQRGKIFTKLIRELVTAAKIGGGDAGSNPRLRAAVDKALASNMTRDTINRAIDRGVGGGDDTNMETRIYEGYGPGGTAVMVECLSDNANRTISQVRPSFTKCGGNLGTEGSVGYLFNKKGLIIIDAGADEDALTEAAIEAGADDIQPQDDGSFEIYTAWEELGDVRDGIEKAGFKIAEAEVSMIPTTSVDLDAETAPKLLRLIEMLEDCDDVQNVYHNGEISDEVAALL</sequence>
<protein>
    <recommendedName>
        <fullName evidence="1">Probable transcriptional regulatory protein MS0710</fullName>
    </recommendedName>
</protein>
<keyword id="KW-0963">Cytoplasm</keyword>
<keyword id="KW-0238">DNA-binding</keyword>
<keyword id="KW-0804">Transcription</keyword>
<keyword id="KW-0805">Transcription regulation</keyword>
<proteinExistence type="inferred from homology"/>
<organism>
    <name type="scientific">Mannheimia succiniciproducens (strain KCTC 0769BP / MBEL55E)</name>
    <dbReference type="NCBI Taxonomy" id="221988"/>
    <lineage>
        <taxon>Bacteria</taxon>
        <taxon>Pseudomonadati</taxon>
        <taxon>Pseudomonadota</taxon>
        <taxon>Gammaproteobacteria</taxon>
        <taxon>Pasteurellales</taxon>
        <taxon>Pasteurellaceae</taxon>
        <taxon>Basfia</taxon>
    </lineage>
</organism>
<comment type="subcellular location">
    <subcellularLocation>
        <location evidence="1">Cytoplasm</location>
    </subcellularLocation>
</comment>
<comment type="similarity">
    <text evidence="1">Belongs to the TACO1 family.</text>
</comment>
<gene>
    <name type="ordered locus">MS0710</name>
</gene>
<name>Y710_MANSM</name>